<name>MIAA_BACHK</name>
<protein>
    <recommendedName>
        <fullName evidence="1">tRNA dimethylallyltransferase</fullName>
        <ecNumber evidence="1">2.5.1.75</ecNumber>
    </recommendedName>
    <alternativeName>
        <fullName evidence="1">Dimethylallyl diphosphate:tRNA dimethylallyltransferase</fullName>
        <shortName evidence="1">DMAPP:tRNA dimethylallyltransferase</shortName>
        <shortName evidence="1">DMATase</shortName>
    </alternativeName>
    <alternativeName>
        <fullName evidence="1">Isopentenyl-diphosphate:tRNA isopentenyltransferase</fullName>
        <shortName evidence="1">IPP transferase</shortName>
        <shortName evidence="1">IPPT</shortName>
        <shortName evidence="1">IPTase</shortName>
    </alternativeName>
</protein>
<dbReference type="EC" id="2.5.1.75" evidence="1"/>
<dbReference type="EMBL" id="AE017355">
    <property type="protein sequence ID" value="AAT60539.1"/>
    <property type="molecule type" value="Genomic_DNA"/>
</dbReference>
<dbReference type="RefSeq" id="WP_000504940.1">
    <property type="nucleotide sequence ID" value="NC_005957.1"/>
</dbReference>
<dbReference type="RefSeq" id="YP_037779.1">
    <property type="nucleotide sequence ID" value="NC_005957.1"/>
</dbReference>
<dbReference type="SMR" id="Q6HF97"/>
<dbReference type="GeneID" id="45023542"/>
<dbReference type="KEGG" id="btk:BT9727_3459"/>
<dbReference type="PATRIC" id="fig|281309.8.peg.3693"/>
<dbReference type="HOGENOM" id="CLU_032616_0_1_9"/>
<dbReference type="Proteomes" id="UP000001301">
    <property type="component" value="Chromosome"/>
</dbReference>
<dbReference type="GO" id="GO:0005524">
    <property type="term" value="F:ATP binding"/>
    <property type="evidence" value="ECO:0007669"/>
    <property type="project" value="UniProtKB-UniRule"/>
</dbReference>
<dbReference type="GO" id="GO:0052381">
    <property type="term" value="F:tRNA dimethylallyltransferase activity"/>
    <property type="evidence" value="ECO:0007669"/>
    <property type="project" value="UniProtKB-UniRule"/>
</dbReference>
<dbReference type="GO" id="GO:0006400">
    <property type="term" value="P:tRNA modification"/>
    <property type="evidence" value="ECO:0007669"/>
    <property type="project" value="TreeGrafter"/>
</dbReference>
<dbReference type="FunFam" id="1.10.20.140:FF:000001">
    <property type="entry name" value="tRNA dimethylallyltransferase"/>
    <property type="match status" value="1"/>
</dbReference>
<dbReference type="Gene3D" id="1.10.20.140">
    <property type="match status" value="1"/>
</dbReference>
<dbReference type="Gene3D" id="3.40.50.300">
    <property type="entry name" value="P-loop containing nucleotide triphosphate hydrolases"/>
    <property type="match status" value="1"/>
</dbReference>
<dbReference type="HAMAP" id="MF_00185">
    <property type="entry name" value="IPP_trans"/>
    <property type="match status" value="1"/>
</dbReference>
<dbReference type="InterPro" id="IPR039657">
    <property type="entry name" value="Dimethylallyltransferase"/>
</dbReference>
<dbReference type="InterPro" id="IPR018022">
    <property type="entry name" value="IPT"/>
</dbReference>
<dbReference type="InterPro" id="IPR027417">
    <property type="entry name" value="P-loop_NTPase"/>
</dbReference>
<dbReference type="NCBIfam" id="TIGR00174">
    <property type="entry name" value="miaA"/>
    <property type="match status" value="1"/>
</dbReference>
<dbReference type="PANTHER" id="PTHR11088">
    <property type="entry name" value="TRNA DIMETHYLALLYLTRANSFERASE"/>
    <property type="match status" value="1"/>
</dbReference>
<dbReference type="PANTHER" id="PTHR11088:SF60">
    <property type="entry name" value="TRNA DIMETHYLALLYLTRANSFERASE"/>
    <property type="match status" value="1"/>
</dbReference>
<dbReference type="Pfam" id="PF01715">
    <property type="entry name" value="IPPT"/>
    <property type="match status" value="1"/>
</dbReference>
<dbReference type="SUPFAM" id="SSF52540">
    <property type="entry name" value="P-loop containing nucleoside triphosphate hydrolases"/>
    <property type="match status" value="2"/>
</dbReference>
<comment type="function">
    <text evidence="1">Catalyzes the transfer of a dimethylallyl group onto the adenine at position 37 in tRNAs that read codons beginning with uridine, leading to the formation of N6-(dimethylallyl)adenosine (i(6)A).</text>
</comment>
<comment type="catalytic activity">
    <reaction evidence="1">
        <text>adenosine(37) in tRNA + dimethylallyl diphosphate = N(6)-dimethylallyladenosine(37) in tRNA + diphosphate</text>
        <dbReference type="Rhea" id="RHEA:26482"/>
        <dbReference type="Rhea" id="RHEA-COMP:10162"/>
        <dbReference type="Rhea" id="RHEA-COMP:10375"/>
        <dbReference type="ChEBI" id="CHEBI:33019"/>
        <dbReference type="ChEBI" id="CHEBI:57623"/>
        <dbReference type="ChEBI" id="CHEBI:74411"/>
        <dbReference type="ChEBI" id="CHEBI:74415"/>
        <dbReference type="EC" id="2.5.1.75"/>
    </reaction>
</comment>
<comment type="cofactor">
    <cofactor evidence="1">
        <name>Mg(2+)</name>
        <dbReference type="ChEBI" id="CHEBI:18420"/>
    </cofactor>
</comment>
<comment type="subunit">
    <text evidence="1">Monomer.</text>
</comment>
<comment type="similarity">
    <text evidence="1">Belongs to the IPP transferase family.</text>
</comment>
<proteinExistence type="inferred from homology"/>
<evidence type="ECO:0000255" key="1">
    <source>
        <dbReference type="HAMAP-Rule" id="MF_00185"/>
    </source>
</evidence>
<reference key="1">
    <citation type="journal article" date="2006" name="J. Bacteriol.">
        <title>Pathogenomic sequence analysis of Bacillus cereus and Bacillus thuringiensis isolates closely related to Bacillus anthracis.</title>
        <authorList>
            <person name="Han C.S."/>
            <person name="Xie G."/>
            <person name="Challacombe J.F."/>
            <person name="Altherr M.R."/>
            <person name="Bhotika S.S."/>
            <person name="Bruce D."/>
            <person name="Campbell C.S."/>
            <person name="Campbell M.L."/>
            <person name="Chen J."/>
            <person name="Chertkov O."/>
            <person name="Cleland C."/>
            <person name="Dimitrijevic M."/>
            <person name="Doggett N.A."/>
            <person name="Fawcett J.J."/>
            <person name="Glavina T."/>
            <person name="Goodwin L.A."/>
            <person name="Hill K.K."/>
            <person name="Hitchcock P."/>
            <person name="Jackson P.J."/>
            <person name="Keim P."/>
            <person name="Kewalramani A.R."/>
            <person name="Longmire J."/>
            <person name="Lucas S."/>
            <person name="Malfatti S."/>
            <person name="McMurry K."/>
            <person name="Meincke L.J."/>
            <person name="Misra M."/>
            <person name="Moseman B.L."/>
            <person name="Mundt M."/>
            <person name="Munk A.C."/>
            <person name="Okinaka R.T."/>
            <person name="Parson-Quintana B."/>
            <person name="Reilly L.P."/>
            <person name="Richardson P."/>
            <person name="Robinson D.L."/>
            <person name="Rubin E."/>
            <person name="Saunders E."/>
            <person name="Tapia R."/>
            <person name="Tesmer J.G."/>
            <person name="Thayer N."/>
            <person name="Thompson L.S."/>
            <person name="Tice H."/>
            <person name="Ticknor L.O."/>
            <person name="Wills P.L."/>
            <person name="Brettin T.S."/>
            <person name="Gilna P."/>
        </authorList>
    </citation>
    <scope>NUCLEOTIDE SEQUENCE [LARGE SCALE GENOMIC DNA]</scope>
    <source>
        <strain>97-27</strain>
    </source>
</reference>
<feature type="chain" id="PRO_0000163874" description="tRNA dimethylallyltransferase">
    <location>
        <begin position="1"/>
        <end position="317"/>
    </location>
</feature>
<feature type="region of interest" description="Interaction with substrate tRNA" evidence="1">
    <location>
        <begin position="39"/>
        <end position="42"/>
    </location>
</feature>
<feature type="binding site" evidence="1">
    <location>
        <begin position="14"/>
        <end position="21"/>
    </location>
    <ligand>
        <name>ATP</name>
        <dbReference type="ChEBI" id="CHEBI:30616"/>
    </ligand>
</feature>
<feature type="binding site" evidence="1">
    <location>
        <begin position="16"/>
        <end position="21"/>
    </location>
    <ligand>
        <name>substrate</name>
    </ligand>
</feature>
<feature type="site" description="Interaction with substrate tRNA" evidence="1">
    <location>
        <position position="105"/>
    </location>
</feature>
<feature type="site" description="Interaction with substrate tRNA" evidence="1">
    <location>
        <position position="128"/>
    </location>
</feature>
<sequence length="317" mass="36652">MGEVQREKVAVIIGPTAVGKTKLSIDLAKALNGEIISGDSMQIYRTMDIGTAKVTKEEMDGIPHYMVDIKNPEESFSVAEFQERVRKHIREITERGKLPIIVGGTGLYIQSVLFDYQFTDDAGDAIYREQMEKLALERGVEYVHKKLQEVDPESAERIHANNVRRVIRALEIFHTSGEKMSDQLEKQENELLYDVSLIGLTMDREMLYDRINLRVDIMMDQGLLEEVEGLYNRGIRDCQSIQAIGYKEIYDYFEDRVSLEEAVSQLKTNSRRYAKRQLTWFRNKMDVTWFDVTDGEKTSEILRYIEGKLQLKSNNSK</sequence>
<accession>Q6HF97</accession>
<keyword id="KW-0067">ATP-binding</keyword>
<keyword id="KW-0460">Magnesium</keyword>
<keyword id="KW-0547">Nucleotide-binding</keyword>
<keyword id="KW-0808">Transferase</keyword>
<keyword id="KW-0819">tRNA processing</keyword>
<organism>
    <name type="scientific">Bacillus thuringiensis subsp. konkukian (strain 97-27)</name>
    <dbReference type="NCBI Taxonomy" id="281309"/>
    <lineage>
        <taxon>Bacteria</taxon>
        <taxon>Bacillati</taxon>
        <taxon>Bacillota</taxon>
        <taxon>Bacilli</taxon>
        <taxon>Bacillales</taxon>
        <taxon>Bacillaceae</taxon>
        <taxon>Bacillus</taxon>
        <taxon>Bacillus cereus group</taxon>
    </lineage>
</organism>
<gene>
    <name evidence="1" type="primary">miaA</name>
    <name type="ordered locus">BT9727_3459</name>
</gene>